<organism>
    <name type="scientific">Homo sapiens</name>
    <name type="common">Human</name>
    <dbReference type="NCBI Taxonomy" id="9606"/>
    <lineage>
        <taxon>Eukaryota</taxon>
        <taxon>Metazoa</taxon>
        <taxon>Chordata</taxon>
        <taxon>Craniata</taxon>
        <taxon>Vertebrata</taxon>
        <taxon>Euteleostomi</taxon>
        <taxon>Mammalia</taxon>
        <taxon>Eutheria</taxon>
        <taxon>Euarchontoglires</taxon>
        <taxon>Primates</taxon>
        <taxon>Haplorrhini</taxon>
        <taxon>Catarrhini</taxon>
        <taxon>Hominidae</taxon>
        <taxon>Homo</taxon>
    </lineage>
</organism>
<accession>Q96C03</accession>
<accession>J3KPT3</accession>
<accession>Q6ZRD4</accession>
<accession>Q96N07</accession>
<gene>
    <name type="primary">MIEF2</name>
    <name type="synonym">MID49</name>
    <name type="synonym">SMCR7</name>
</gene>
<proteinExistence type="evidence at protein level"/>
<feature type="chain" id="PRO_0000310445" description="Mitochondrial dynamics protein MID49">
    <location>
        <begin position="1"/>
        <end position="454"/>
    </location>
</feature>
<feature type="topological domain" description="Mitochondrial intermembrane" evidence="2">
    <location>
        <begin position="1"/>
        <end position="22"/>
    </location>
</feature>
<feature type="transmembrane region" description="Helical" evidence="2">
    <location>
        <begin position="23"/>
        <end position="43"/>
    </location>
</feature>
<feature type="topological domain" description="Cytoplasmic" evidence="2">
    <location>
        <begin position="44"/>
        <end position="454"/>
    </location>
</feature>
<feature type="region of interest" description="Disordered" evidence="3">
    <location>
        <begin position="76"/>
        <end position="119"/>
    </location>
</feature>
<feature type="compositionally biased region" description="Low complexity" evidence="3">
    <location>
        <begin position="88"/>
        <end position="103"/>
    </location>
</feature>
<feature type="modified residue" description="Phosphoserine" evidence="14">
    <location>
        <position position="13"/>
    </location>
</feature>
<feature type="splice variant" id="VSP_047650" description="In isoform 3." evidence="12">
    <original>M</original>
    <variation>MGLSPNLDRQTM</variation>
    <location>
        <position position="1"/>
    </location>
</feature>
<feature type="splice variant" id="VSP_029358" description="In isoform 2." evidence="11">
    <original>EGPAETDPEVTPQLSSPAPLCLTLQERLLAFERDRVTIPAAQVALAKQLAGDIALELQAYFRSKFPELPFGAFVPGGPLYDGLQAGAADHVRLLVPLVLEPG</original>
    <variation>GEAAGLRAGPCDHPSSPGGFGQTAGWRHRPGAAGLLSEQVPGTALWGIRAWGAALRRAAGGGCGPCASPGATGAGAGPVEPGAGRGHCGEGPSLLGRAQDAA</variation>
    <location>
        <begin position="104"/>
        <end position="205"/>
    </location>
</feature>
<feature type="splice variant" id="VSP_029359" description="In isoform 2." evidence="11">
    <location>
        <begin position="206"/>
        <end position="454"/>
    </location>
</feature>
<feature type="sequence variant" id="VAR_081553" description="In COXPD49; patient cells have reduced MIEF2 protein levels and show elongated mitochondria and increased mitochondrial fusion events." evidence="9">
    <location>
        <begin position="81"/>
        <end position="454"/>
    </location>
</feature>
<feature type="sequence variant" id="VAR_037038" description="In dbSNP:rs12603700.">
    <original>G</original>
    <variation>E</variation>
    <location>
        <position position="324"/>
    </location>
</feature>
<feature type="sequence variant" id="VAR_037039" description="In dbSNP:rs3751981.">
    <original>R</original>
    <variation>Q</variation>
    <location>
        <position position="354"/>
    </location>
</feature>
<feature type="mutagenesis site" description="Unable to associate with DNM1L into filaments forming the tubular structures that wrap around the scission site." evidence="10">
    <original>R</original>
    <variation>E</variation>
    <location>
        <position position="235"/>
    </location>
</feature>
<feature type="sequence conflict" description="In Ref. 2; BAB71108." evidence="12" ref="2">
    <original>L</original>
    <variation>F</variation>
    <location>
        <position position="249"/>
    </location>
</feature>
<sequence length="454" mass="49269">MAEFSQKRGKRRSDEGLGSMVDFLLANARLVLGVGGAAVLGIATLAVKRFIDRATSPRDEDDTKADSWKELSLLKATPHLQPRPPPAALSQPVLPLAPSSSAPEGPAETDPEVTPQLSSPAPLCLTLQERLLAFERDRVTIPAAQVALAKQLAGDIALELQAYFRSKFPELPFGAFVPGGPLYDGLQAGAADHVRLLVPLVLEPGLWSLVPGVDTVARDPRCWAVRRTQLEFCPRGSSPWDRFLVGGYLSSRVLLELLRKALAASVNWPAIGSLLGCLIRPSMASEELLLEVQHERLELTVAVLVAVPGVDADDRLLLAWPLEGLAGNLWLQDLYPVEAARLRALDDHDAGTRRRLLLLLCAVCRGCSALGQLGRGHLTQVVLRLGEDNVDWTEEALGERFLQALELLIGSLEQASLPCHFNPSVNLFSSLREEEIDDIGYALYSGLQEPEGLL</sequence>
<comment type="function">
    <text evidence="5 6 7 8 9 10">Mitochondrial outer membrane protein involved in the regulation of mitochondrial organization (PubMed:29361167). It is required for mitochondrial fission and promotes the recruitment and association of the fission mediator dynamin-related protein 1 (DNM1L) to the mitochondrial surface independently of the mitochondrial fission FIS1 and MFF proteins. Regulates DNM1L GTPase activity.</text>
</comment>
<comment type="subunit">
    <text evidence="5 6 7 10">Interacts with DNM1L.</text>
</comment>
<comment type="interaction">
    <interactant intactId="EBI-750153">
        <id>Q96C03</id>
    </interactant>
    <interactant intactId="EBI-741181">
        <id>Q6RW13</id>
        <label>AGTRAP</label>
    </interactant>
    <organismsDiffer>false</organismsDiffer>
    <experiments>3</experiments>
</comment>
<comment type="interaction">
    <interactant intactId="EBI-750153">
        <id>Q96C03</id>
    </interactant>
    <interactant intactId="EBI-724571">
        <id>O00429</id>
        <label>DNM1L</label>
    </interactant>
    <organismsDiffer>false</organismsDiffer>
    <experiments>5</experiments>
</comment>
<comment type="interaction">
    <interactant intactId="EBI-750153">
        <id>Q96C03</id>
    </interactant>
    <interactant intactId="EBI-712367">
        <id>Q9UI14</id>
        <label>RABAC1</label>
    </interactant>
    <organismsDiffer>false</organismsDiffer>
    <experiments>3</experiments>
</comment>
<comment type="interaction">
    <interactant intactId="EBI-750153">
        <id>Q96C03</id>
    </interactant>
    <interactant intactId="EBI-741480">
        <id>Q9UMX0</id>
        <label>UBQLN1</label>
    </interactant>
    <organismsDiffer>false</organismsDiffer>
    <experiments>4</experiments>
</comment>
<comment type="interaction">
    <interactant intactId="EBI-750153">
        <id>Q96C03</id>
    </interactant>
    <interactant intactId="EBI-10173939">
        <id>Q9UMX0-2</id>
        <label>UBQLN1</label>
    </interactant>
    <organismsDiffer>false</organismsDiffer>
    <experiments>3</experiments>
</comment>
<comment type="interaction">
    <interactant intactId="EBI-11988931">
        <id>Q96C03-3</id>
    </interactant>
    <interactant intactId="EBI-11522760">
        <id>Q6RW13-2</id>
        <label>AGTRAP</label>
    </interactant>
    <organismsDiffer>false</organismsDiffer>
    <experiments>3</experiments>
</comment>
<comment type="interaction">
    <interactant intactId="EBI-11988931">
        <id>Q96C03-3</id>
    </interactant>
    <interactant intactId="EBI-638194">
        <id>P53365</id>
        <label>ARFIP2</label>
    </interactant>
    <organismsDiffer>false</organismsDiffer>
    <experiments>3</experiments>
</comment>
<comment type="interaction">
    <interactant intactId="EBI-11988931">
        <id>Q96C03-3</id>
    </interactant>
    <interactant intactId="EBI-714543">
        <id>Q15041</id>
        <label>ARL6IP1</label>
    </interactant>
    <organismsDiffer>false</organismsDiffer>
    <experiments>3</experiments>
</comment>
<comment type="interaction">
    <interactant intactId="EBI-11988931">
        <id>Q96C03-3</id>
    </interactant>
    <interactant intactId="EBI-2606700">
        <id>P18859</id>
        <label>ATP5PF</label>
    </interactant>
    <organismsDiffer>false</organismsDiffer>
    <experiments>3</experiments>
</comment>
<comment type="interaction">
    <interactant intactId="EBI-11988931">
        <id>Q96C03-3</id>
    </interactant>
    <interactant intactId="EBI-718729">
        <id>P55212</id>
        <label>CASP6</label>
    </interactant>
    <organismsDiffer>false</organismsDiffer>
    <experiments>3</experiments>
</comment>
<comment type="interaction">
    <interactant intactId="EBI-11988931">
        <id>Q96C03-3</id>
    </interactant>
    <interactant intactId="EBI-12947393">
        <id>Q8N5P9</id>
        <label>CIDEA</label>
    </interactant>
    <organismsDiffer>false</organismsDiffer>
    <experiments>3</experiments>
</comment>
<comment type="interaction">
    <interactant intactId="EBI-11988931">
        <id>Q96C03-3</id>
    </interactant>
    <interactant intactId="EBI-10973142">
        <id>Q9NRY5</id>
        <label>FAM114A2</label>
    </interactant>
    <organismsDiffer>false</organismsDiffer>
    <experiments>3</experiments>
</comment>
<comment type="interaction">
    <interactant intactId="EBI-11988931">
        <id>Q96C03-3</id>
    </interactant>
    <interactant intactId="EBI-14240149">
        <id>B3EWG3</id>
        <label>FAM25A</label>
    </interactant>
    <organismsDiffer>false</organismsDiffer>
    <experiments>3</experiments>
</comment>
<comment type="interaction">
    <interactant intactId="EBI-11988931">
        <id>Q96C03-3</id>
    </interactant>
    <interactant intactId="EBI-3918971">
        <id>Q9Y680</id>
        <label>FKBP7</label>
    </interactant>
    <organismsDiffer>false</organismsDiffer>
    <experiments>3</experiments>
</comment>
<comment type="interaction">
    <interactant intactId="EBI-11988931">
        <id>Q96C03-3</id>
    </interactant>
    <interactant intactId="EBI-12951679">
        <id>Q2KHT4-3</id>
        <label>GSG1</label>
    </interactant>
    <organismsDiffer>false</organismsDiffer>
    <experiments>3</experiments>
</comment>
<comment type="interaction">
    <interactant intactId="EBI-11988931">
        <id>Q96C03-3</id>
    </interactant>
    <interactant intactId="EBI-18053395">
        <id>Q7Z5P4</id>
        <label>HSD17B13</label>
    </interactant>
    <organismsDiffer>false</organismsDiffer>
    <experiments>3</experiments>
</comment>
<comment type="interaction">
    <interactant intactId="EBI-11988931">
        <id>Q96C03-3</id>
    </interactant>
    <interactant intactId="EBI-2830566">
        <id>Q9H400</id>
        <label>LIME1</label>
    </interactant>
    <organismsDiffer>false</organismsDiffer>
    <experiments>3</experiments>
</comment>
<comment type="interaction">
    <interactant intactId="EBI-11988931">
        <id>Q96C03-3</id>
    </interactant>
    <interactant intactId="EBI-722444">
        <id>P21741</id>
        <label>MDK</label>
    </interactant>
    <organismsDiffer>false</organismsDiffer>
    <experiments>3</experiments>
</comment>
<comment type="interaction">
    <interactant intactId="EBI-11988931">
        <id>Q96C03-3</id>
    </interactant>
    <interactant intactId="EBI-749635">
        <id>P61601</id>
        <label>NCALD</label>
    </interactant>
    <organismsDiffer>false</organismsDiffer>
    <experiments>3</experiments>
</comment>
<comment type="interaction">
    <interactant intactId="EBI-11988931">
        <id>Q96C03-3</id>
    </interactant>
    <interactant intactId="EBI-746987">
        <id>P62166</id>
        <label>NCS1</label>
    </interactant>
    <organismsDiffer>false</organismsDiffer>
    <experiments>3</experiments>
</comment>
<comment type="interaction">
    <interactant intactId="EBI-11988931">
        <id>Q96C03-3</id>
    </interactant>
    <interactant intactId="EBI-19951389">
        <id>P02812</id>
        <label>PRB2</label>
    </interactant>
    <organismsDiffer>false</organismsDiffer>
    <experiments>3</experiments>
</comment>
<comment type="interaction">
    <interactant intactId="EBI-11988931">
        <id>Q96C03-3</id>
    </interactant>
    <interactant intactId="EBI-712367">
        <id>Q9UI14</id>
        <label>RABAC1</label>
    </interactant>
    <organismsDiffer>false</organismsDiffer>
    <experiments>3</experiments>
</comment>
<comment type="interaction">
    <interactant intactId="EBI-11988931">
        <id>Q96C03-3</id>
    </interactant>
    <interactant intactId="EBI-14065960">
        <id>Q96HR9-2</id>
        <label>REEP6</label>
    </interactant>
    <organismsDiffer>false</organismsDiffer>
    <experiments>3</experiments>
</comment>
<comment type="interaction">
    <interactant intactId="EBI-11988931">
        <id>Q96C03-3</id>
    </interactant>
    <interactant intactId="EBI-17589229">
        <id>Q6NTF9-3</id>
        <label>RHBDD2</label>
    </interactant>
    <organismsDiffer>false</organismsDiffer>
    <experiments>3</experiments>
</comment>
<comment type="interaction">
    <interactant intactId="EBI-11988931">
        <id>Q96C03-3</id>
    </interactant>
    <interactant intactId="EBI-2854842">
        <id>Q8WV19</id>
        <label>SFT2D1</label>
    </interactant>
    <organismsDiffer>false</organismsDiffer>
    <experiments>3</experiments>
</comment>
<comment type="interaction">
    <interactant intactId="EBI-11988931">
        <id>Q96C03-3</id>
    </interactant>
    <interactant intactId="EBI-2623095">
        <id>Q9Y371</id>
        <label>SH3GLB1</label>
    </interactant>
    <organismsDiffer>false</organismsDiffer>
    <experiments>3</experiments>
</comment>
<comment type="interaction">
    <interactant intactId="EBI-11988931">
        <id>Q96C03-3</id>
    </interactant>
    <interactant intactId="EBI-9071725">
        <id>P08247</id>
        <label>SYP</label>
    </interactant>
    <organismsDiffer>false</organismsDiffer>
    <experiments>3</experiments>
</comment>
<comment type="interaction">
    <interactant intactId="EBI-11988931">
        <id>Q96C03-3</id>
    </interactant>
    <interactant intactId="EBI-11528917">
        <id>Q8WW34-2</id>
        <label>TMEM239</label>
    </interactant>
    <organismsDiffer>false</organismsDiffer>
    <experiments>3</experiments>
</comment>
<comment type="interaction">
    <interactant intactId="EBI-11988931">
        <id>Q96C03-3</id>
    </interactant>
    <interactant intactId="EBI-947187">
        <id>Q9UHD9</id>
        <label>UBQLN2</label>
    </interactant>
    <organismsDiffer>false</organismsDiffer>
    <experiments>3</experiments>
</comment>
<comment type="interaction">
    <interactant intactId="EBI-11988931">
        <id>Q96C03-3</id>
    </interactant>
    <interactant intactId="EBI-2799703">
        <id>O95070</id>
        <label>YIF1A</label>
    </interactant>
    <organismsDiffer>false</organismsDiffer>
    <experiments>3</experiments>
</comment>
<comment type="interaction">
    <interactant intactId="EBI-11988931">
        <id>Q96C03-3</id>
    </interactant>
    <interactant intactId="EBI-13086230">
        <id>Q5EBL2</id>
        <label>ZNF628</label>
    </interactant>
    <organismsDiffer>false</organismsDiffer>
    <experiments>3</experiments>
</comment>
<comment type="subcellular location">
    <subcellularLocation>
        <location evidence="5">Mitochondrion outer membrane</location>
        <topology evidence="5">Single-pass membrane protein</topology>
    </subcellularLocation>
    <text>Colocalizes with DNM1L at mitochondrial membrane. Forms foci and rings around mitochondria.</text>
</comment>
<comment type="alternative products">
    <event type="alternative splicing"/>
    <isoform>
        <id>Q96C03-1</id>
        <name>1</name>
        <sequence type="displayed"/>
    </isoform>
    <isoform>
        <id>Q96C03-2</id>
        <name>2</name>
        <sequence type="described" ref="VSP_029358 VSP_029359"/>
    </isoform>
    <isoform>
        <id>Q96C03-3</id>
        <name>3</name>
        <sequence type="described" ref="VSP_047650"/>
    </isoform>
</comment>
<comment type="tissue specificity">
    <text evidence="4">Expressed in all tissues tested with highest expression in heart and skeletal muscle.</text>
</comment>
<comment type="disease" evidence="9">
    <disease id="DI-05914">
        <name>Combined oxidative phosphorylation deficiency 49</name>
        <acronym>COXPD49</acronym>
        <description>An autosomal recessive, mitochondrial myopathy characterized by progressive muscle weakness, intermittent muscle pain, exercise intolerance, elevated serum creatine kinase, and deficiencies of multiple respiratory chain enzymes.</description>
        <dbReference type="MIM" id="619024"/>
    </disease>
    <text>The disease may be caused by variants affecting the gene represented in this entry.</text>
</comment>
<comment type="miscellaneous">
    <text evidence="1">Does not bind ADP or other nucleotides, in contrast to MIEF1.</text>
</comment>
<comment type="similarity">
    <text evidence="12">Belongs to the MID49/MID51 family.</text>
</comment>
<name>MID49_HUMAN</name>
<dbReference type="EMBL" id="AF467443">
    <property type="protein sequence ID" value="AAL78340.1"/>
    <property type="molecule type" value="mRNA"/>
</dbReference>
<dbReference type="EMBL" id="AK056165">
    <property type="protein sequence ID" value="BAB71108.1"/>
    <property type="molecule type" value="mRNA"/>
</dbReference>
<dbReference type="EMBL" id="AK128310">
    <property type="protein sequence ID" value="BAC87377.1"/>
    <property type="molecule type" value="mRNA"/>
</dbReference>
<dbReference type="EMBL" id="AC127537">
    <property type="status" value="NOT_ANNOTATED_CDS"/>
    <property type="molecule type" value="Genomic_DNA"/>
</dbReference>
<dbReference type="EMBL" id="CH471196">
    <property type="protein sequence ID" value="EAW55651.1"/>
    <property type="molecule type" value="Genomic_DNA"/>
</dbReference>
<dbReference type="EMBL" id="CH471196">
    <property type="protein sequence ID" value="EAW55652.1"/>
    <property type="molecule type" value="Genomic_DNA"/>
</dbReference>
<dbReference type="EMBL" id="BC014973">
    <property type="protein sequence ID" value="AAH14973.1"/>
    <property type="molecule type" value="mRNA"/>
</dbReference>
<dbReference type="CCDS" id="CCDS11193.1">
    <molecule id="Q96C03-1"/>
</dbReference>
<dbReference type="CCDS" id="CCDS45624.1">
    <molecule id="Q96C03-3"/>
</dbReference>
<dbReference type="CCDS" id="CCDS45625.1">
    <molecule id="Q96C03-2"/>
</dbReference>
<dbReference type="RefSeq" id="NP_001138372.1">
    <molecule id="Q96C03-2"/>
    <property type="nucleotide sequence ID" value="NM_001144900.3"/>
</dbReference>
<dbReference type="RefSeq" id="NP_631901.2">
    <molecule id="Q96C03-1"/>
    <property type="nucleotide sequence ID" value="NM_139162.3"/>
</dbReference>
<dbReference type="RefSeq" id="NP_683684.2">
    <molecule id="Q96C03-3"/>
    <property type="nucleotide sequence ID" value="NM_148886.2"/>
</dbReference>
<dbReference type="PDB" id="5WP9">
    <property type="method" value="EM"/>
    <property type="resolution" value="4.22 A"/>
    <property type="chains" value="B/D/F/H/J/L/N/P=126-454"/>
</dbReference>
<dbReference type="PDBsum" id="5WP9"/>
<dbReference type="EMDB" id="EMD-8874"/>
<dbReference type="SMR" id="Q96C03"/>
<dbReference type="BioGRID" id="125921">
    <property type="interactions" value="34"/>
</dbReference>
<dbReference type="FunCoup" id="Q96C03">
    <property type="interactions" value="141"/>
</dbReference>
<dbReference type="IntAct" id="Q96C03">
    <property type="interactions" value="31"/>
</dbReference>
<dbReference type="MINT" id="Q96C03"/>
<dbReference type="STRING" id="9606.ENSP00000379057"/>
<dbReference type="iPTMnet" id="Q96C03"/>
<dbReference type="PhosphoSitePlus" id="Q96C03"/>
<dbReference type="BioMuta" id="MIEF2"/>
<dbReference type="DMDM" id="74731298"/>
<dbReference type="jPOST" id="Q96C03"/>
<dbReference type="MassIVE" id="Q96C03"/>
<dbReference type="PaxDb" id="9606-ENSP00000379057"/>
<dbReference type="PeptideAtlas" id="Q96C03"/>
<dbReference type="ProteomicsDB" id="76139">
    <molecule id="Q96C03-1"/>
</dbReference>
<dbReference type="ProteomicsDB" id="76140">
    <molecule id="Q96C03-2"/>
</dbReference>
<dbReference type="Antibodypedia" id="49918">
    <property type="antibodies" value="68 antibodies from 17 providers"/>
</dbReference>
<dbReference type="DNASU" id="125170"/>
<dbReference type="Ensembl" id="ENST00000323019.9">
    <molecule id="Q96C03-1"/>
    <property type="protein sequence ID" value="ENSP00000323591.4"/>
    <property type="gene ID" value="ENSG00000177427.13"/>
</dbReference>
<dbReference type="Ensembl" id="ENST00000395704.8">
    <molecule id="Q96C03-2"/>
    <property type="protein sequence ID" value="ENSP00000379056.4"/>
    <property type="gene ID" value="ENSG00000177427.13"/>
</dbReference>
<dbReference type="Ensembl" id="ENST00000395706.2">
    <molecule id="Q96C03-3"/>
    <property type="protein sequence ID" value="ENSP00000379057.2"/>
    <property type="gene ID" value="ENSG00000177427.13"/>
</dbReference>
<dbReference type="Ensembl" id="ENST00000640122.2">
    <molecule id="Q96C03-1"/>
    <property type="protein sequence ID" value="ENSP00000491181.1"/>
    <property type="gene ID" value="ENSG00000284495.2"/>
</dbReference>
<dbReference type="Ensembl" id="ENST00000640339.1">
    <molecule id="Q96C03-3"/>
    <property type="protein sequence ID" value="ENSP00000492195.1"/>
    <property type="gene ID" value="ENSG00000284495.2"/>
</dbReference>
<dbReference type="Ensembl" id="ENST00000640637.1">
    <molecule id="Q96C03-2"/>
    <property type="protein sequence ID" value="ENSP00000490984.1"/>
    <property type="gene ID" value="ENSG00000284495.2"/>
</dbReference>
<dbReference type="GeneID" id="125170"/>
<dbReference type="KEGG" id="hsa:125170"/>
<dbReference type="MANE-Select" id="ENST00000323019.9">
    <property type="protein sequence ID" value="ENSP00000323591.4"/>
    <property type="RefSeq nucleotide sequence ID" value="NM_139162.4"/>
    <property type="RefSeq protein sequence ID" value="NP_631901.2"/>
</dbReference>
<dbReference type="UCSC" id="uc002gst.4">
    <molecule id="Q96C03-1"/>
    <property type="organism name" value="human"/>
</dbReference>
<dbReference type="AGR" id="HGNC:17920"/>
<dbReference type="CTD" id="125170"/>
<dbReference type="DisGeNET" id="125170"/>
<dbReference type="GeneCards" id="MIEF2"/>
<dbReference type="HGNC" id="HGNC:17920">
    <property type="gene designation" value="MIEF2"/>
</dbReference>
<dbReference type="HPA" id="ENSG00000177427">
    <property type="expression patterns" value="Low tissue specificity"/>
</dbReference>
<dbReference type="MalaCards" id="MIEF2"/>
<dbReference type="MIM" id="615498">
    <property type="type" value="gene"/>
</dbReference>
<dbReference type="MIM" id="619024">
    <property type="type" value="phenotype"/>
</dbReference>
<dbReference type="neXtProt" id="NX_Q96C03"/>
<dbReference type="OpenTargets" id="ENSG00000177427"/>
<dbReference type="PharmGKB" id="PA38265"/>
<dbReference type="VEuPathDB" id="HostDB:ENSG00000177427"/>
<dbReference type="eggNOG" id="ENOG502QPJX">
    <property type="taxonomic scope" value="Eukaryota"/>
</dbReference>
<dbReference type="GeneTree" id="ENSGT00390000013127"/>
<dbReference type="HOGENOM" id="CLU_046803_0_0_1"/>
<dbReference type="InParanoid" id="Q96C03"/>
<dbReference type="OMA" id="VCRGHPA"/>
<dbReference type="OrthoDB" id="5964386at2759"/>
<dbReference type="PAN-GO" id="Q96C03">
    <property type="GO annotations" value="2 GO annotations based on evolutionary models"/>
</dbReference>
<dbReference type="PhylomeDB" id="Q96C03"/>
<dbReference type="TreeFam" id="TF331032"/>
<dbReference type="PathwayCommons" id="Q96C03"/>
<dbReference type="SignaLink" id="Q96C03"/>
<dbReference type="BioGRID-ORCS" id="125170">
    <property type="hits" value="17 hits in 1141 CRISPR screens"/>
</dbReference>
<dbReference type="ChiTaRS" id="MIEF2">
    <property type="organism name" value="human"/>
</dbReference>
<dbReference type="GenomeRNAi" id="125170"/>
<dbReference type="Pharos" id="Q96C03">
    <property type="development level" value="Tbio"/>
</dbReference>
<dbReference type="PRO" id="PR:Q96C03"/>
<dbReference type="Proteomes" id="UP000005640">
    <property type="component" value="Chromosome 17"/>
</dbReference>
<dbReference type="RNAct" id="Q96C03">
    <property type="molecule type" value="protein"/>
</dbReference>
<dbReference type="Bgee" id="ENSG00000177427">
    <property type="expression patterns" value="Expressed in hindlimb stylopod muscle and 100 other cell types or tissues"/>
</dbReference>
<dbReference type="ExpressionAtlas" id="Q96C03">
    <property type="expression patterns" value="baseline and differential"/>
</dbReference>
<dbReference type="GO" id="GO:0005741">
    <property type="term" value="C:mitochondrial outer membrane"/>
    <property type="evidence" value="ECO:0000314"/>
    <property type="project" value="UniProtKB"/>
</dbReference>
<dbReference type="GO" id="GO:0005739">
    <property type="term" value="C:mitochondrion"/>
    <property type="evidence" value="ECO:0000314"/>
    <property type="project" value="UniProtKB"/>
</dbReference>
<dbReference type="GO" id="GO:0007005">
    <property type="term" value="P:mitochondrion organization"/>
    <property type="evidence" value="ECO:0000314"/>
    <property type="project" value="UniProtKB"/>
</dbReference>
<dbReference type="GO" id="GO:0090141">
    <property type="term" value="P:positive regulation of mitochondrial fission"/>
    <property type="evidence" value="ECO:0000314"/>
    <property type="project" value="UniProtKB"/>
</dbReference>
<dbReference type="GO" id="GO:0090314">
    <property type="term" value="P:positive regulation of protein targeting to membrane"/>
    <property type="evidence" value="ECO:0000314"/>
    <property type="project" value="UniProtKB"/>
</dbReference>
<dbReference type="GO" id="GO:0010821">
    <property type="term" value="P:regulation of mitochondrion organization"/>
    <property type="evidence" value="ECO:0000315"/>
    <property type="project" value="UniProtKB"/>
</dbReference>
<dbReference type="FunFam" id="1.10.1410.40:FF:000003">
    <property type="entry name" value="Mitochondrial dynamics protein MID51"/>
    <property type="match status" value="1"/>
</dbReference>
<dbReference type="FunFam" id="3.30.460.90:FF:000004">
    <property type="entry name" value="Mitochondrial elongation factor 2"/>
    <property type="match status" value="1"/>
</dbReference>
<dbReference type="Gene3D" id="1.10.1410.40">
    <property type="match status" value="1"/>
</dbReference>
<dbReference type="Gene3D" id="3.30.460.90">
    <property type="match status" value="1"/>
</dbReference>
<dbReference type="InterPro" id="IPR046906">
    <property type="entry name" value="Mab-21_HhH/H2TH-like"/>
</dbReference>
<dbReference type="InterPro" id="IPR024810">
    <property type="entry name" value="MAB21L/cGLR"/>
</dbReference>
<dbReference type="InterPro" id="IPR045909">
    <property type="entry name" value="MID49/MID51"/>
</dbReference>
<dbReference type="InterPro" id="IPR049097">
    <property type="entry name" value="MID51-like_C"/>
</dbReference>
<dbReference type="PANTHER" id="PTHR16451:SF11">
    <property type="entry name" value="MITOCHONDRIAL DYNAMICS PROTEIN MID49"/>
    <property type="match status" value="1"/>
</dbReference>
<dbReference type="PANTHER" id="PTHR16451">
    <property type="entry name" value="MITOCHONDRIAL DYNAMICS PROTEINS 49/51 FAMILY MEMBER"/>
    <property type="match status" value="1"/>
</dbReference>
<dbReference type="Pfam" id="PF20266">
    <property type="entry name" value="Mab-21_C"/>
    <property type="match status" value="1"/>
</dbReference>
<dbReference type="Pfam" id="PF21297">
    <property type="entry name" value="MID51-like_C"/>
    <property type="match status" value="1"/>
</dbReference>
<dbReference type="SMART" id="SM01265">
    <property type="entry name" value="Mab-21"/>
    <property type="match status" value="1"/>
</dbReference>
<reference key="1">
    <citation type="journal article" date="2002" name="Genome Res.">
        <title>Genes in a refined Smith-Magenis syndrome critical deletion interval on chromosome 17p11.2 and the syntenic region of the mouse.</title>
        <authorList>
            <person name="Bi W."/>
            <person name="Yan J."/>
            <person name="Stankiewicz P."/>
            <person name="Park S.-S."/>
            <person name="Walz K."/>
            <person name="Boerkoel C.F."/>
            <person name="Potocki L."/>
            <person name="Shaffer L.G."/>
            <person name="Devriendt K."/>
            <person name="Nowaczyk M.J.M."/>
            <person name="Inoue K."/>
            <person name="Lupski J.R."/>
        </authorList>
    </citation>
    <scope>NUCLEOTIDE SEQUENCE [MRNA] (ISOFORM 1)</scope>
    <scope>TISSUE SPECIFICITY</scope>
</reference>
<reference key="2">
    <citation type="journal article" date="2004" name="Nat. Genet.">
        <title>Complete sequencing and characterization of 21,243 full-length human cDNAs.</title>
        <authorList>
            <person name="Ota T."/>
            <person name="Suzuki Y."/>
            <person name="Nishikawa T."/>
            <person name="Otsuki T."/>
            <person name="Sugiyama T."/>
            <person name="Irie R."/>
            <person name="Wakamatsu A."/>
            <person name="Hayashi K."/>
            <person name="Sato H."/>
            <person name="Nagai K."/>
            <person name="Kimura K."/>
            <person name="Makita H."/>
            <person name="Sekine M."/>
            <person name="Obayashi M."/>
            <person name="Nishi T."/>
            <person name="Shibahara T."/>
            <person name="Tanaka T."/>
            <person name="Ishii S."/>
            <person name="Yamamoto J."/>
            <person name="Saito K."/>
            <person name="Kawai Y."/>
            <person name="Isono Y."/>
            <person name="Nakamura Y."/>
            <person name="Nagahari K."/>
            <person name="Murakami K."/>
            <person name="Yasuda T."/>
            <person name="Iwayanagi T."/>
            <person name="Wagatsuma M."/>
            <person name="Shiratori A."/>
            <person name="Sudo H."/>
            <person name="Hosoiri T."/>
            <person name="Kaku Y."/>
            <person name="Kodaira H."/>
            <person name="Kondo H."/>
            <person name="Sugawara M."/>
            <person name="Takahashi M."/>
            <person name="Kanda K."/>
            <person name="Yokoi T."/>
            <person name="Furuya T."/>
            <person name="Kikkawa E."/>
            <person name="Omura Y."/>
            <person name="Abe K."/>
            <person name="Kamihara K."/>
            <person name="Katsuta N."/>
            <person name="Sato K."/>
            <person name="Tanikawa M."/>
            <person name="Yamazaki M."/>
            <person name="Ninomiya K."/>
            <person name="Ishibashi T."/>
            <person name="Yamashita H."/>
            <person name="Murakawa K."/>
            <person name="Fujimori K."/>
            <person name="Tanai H."/>
            <person name="Kimata M."/>
            <person name="Watanabe M."/>
            <person name="Hiraoka S."/>
            <person name="Chiba Y."/>
            <person name="Ishida S."/>
            <person name="Ono Y."/>
            <person name="Takiguchi S."/>
            <person name="Watanabe S."/>
            <person name="Yosida M."/>
            <person name="Hotuta T."/>
            <person name="Kusano J."/>
            <person name="Kanehori K."/>
            <person name="Takahashi-Fujii A."/>
            <person name="Hara H."/>
            <person name="Tanase T.-O."/>
            <person name="Nomura Y."/>
            <person name="Togiya S."/>
            <person name="Komai F."/>
            <person name="Hara R."/>
            <person name="Takeuchi K."/>
            <person name="Arita M."/>
            <person name="Imose N."/>
            <person name="Musashino K."/>
            <person name="Yuuki H."/>
            <person name="Oshima A."/>
            <person name="Sasaki N."/>
            <person name="Aotsuka S."/>
            <person name="Yoshikawa Y."/>
            <person name="Matsunawa H."/>
            <person name="Ichihara T."/>
            <person name="Shiohata N."/>
            <person name="Sano S."/>
            <person name="Moriya S."/>
            <person name="Momiyama H."/>
            <person name="Satoh N."/>
            <person name="Takami S."/>
            <person name="Terashima Y."/>
            <person name="Suzuki O."/>
            <person name="Nakagawa S."/>
            <person name="Senoh A."/>
            <person name="Mizoguchi H."/>
            <person name="Goto Y."/>
            <person name="Shimizu F."/>
            <person name="Wakebe H."/>
            <person name="Hishigaki H."/>
            <person name="Watanabe T."/>
            <person name="Sugiyama A."/>
            <person name="Takemoto M."/>
            <person name="Kawakami B."/>
            <person name="Yamazaki M."/>
            <person name="Watanabe K."/>
            <person name="Kumagai A."/>
            <person name="Itakura S."/>
            <person name="Fukuzumi Y."/>
            <person name="Fujimori Y."/>
            <person name="Komiyama M."/>
            <person name="Tashiro H."/>
            <person name="Tanigami A."/>
            <person name="Fujiwara T."/>
            <person name="Ono T."/>
            <person name="Yamada K."/>
            <person name="Fujii Y."/>
            <person name="Ozaki K."/>
            <person name="Hirao M."/>
            <person name="Ohmori Y."/>
            <person name="Kawabata A."/>
            <person name="Hikiji T."/>
            <person name="Kobatake N."/>
            <person name="Inagaki H."/>
            <person name="Ikema Y."/>
            <person name="Okamoto S."/>
            <person name="Okitani R."/>
            <person name="Kawakami T."/>
            <person name="Noguchi S."/>
            <person name="Itoh T."/>
            <person name="Shigeta K."/>
            <person name="Senba T."/>
            <person name="Matsumura K."/>
            <person name="Nakajima Y."/>
            <person name="Mizuno T."/>
            <person name="Morinaga M."/>
            <person name="Sasaki M."/>
            <person name="Togashi T."/>
            <person name="Oyama M."/>
            <person name="Hata H."/>
            <person name="Watanabe M."/>
            <person name="Komatsu T."/>
            <person name="Mizushima-Sugano J."/>
            <person name="Satoh T."/>
            <person name="Shirai Y."/>
            <person name="Takahashi Y."/>
            <person name="Nakagawa K."/>
            <person name="Okumura K."/>
            <person name="Nagase T."/>
            <person name="Nomura N."/>
            <person name="Kikuchi H."/>
            <person name="Masuho Y."/>
            <person name="Yamashita R."/>
            <person name="Nakai K."/>
            <person name="Yada T."/>
            <person name="Nakamura Y."/>
            <person name="Ohara O."/>
            <person name="Isogai T."/>
            <person name="Sugano S."/>
        </authorList>
    </citation>
    <scope>NUCLEOTIDE SEQUENCE [LARGE SCALE MRNA] (ISOFORMS 1 AND 2)</scope>
    <source>
        <tissue>Teratocarcinoma</tissue>
        <tissue>Thymus</tissue>
    </source>
</reference>
<reference key="3">
    <citation type="journal article" date="2006" name="Nature">
        <title>DNA sequence of human chromosome 17 and analysis of rearrangement in the human lineage.</title>
        <authorList>
            <person name="Zody M.C."/>
            <person name="Garber M."/>
            <person name="Adams D.J."/>
            <person name="Sharpe T."/>
            <person name="Harrow J."/>
            <person name="Lupski J.R."/>
            <person name="Nicholson C."/>
            <person name="Searle S.M."/>
            <person name="Wilming L."/>
            <person name="Young S.K."/>
            <person name="Abouelleil A."/>
            <person name="Allen N.R."/>
            <person name="Bi W."/>
            <person name="Bloom T."/>
            <person name="Borowsky M.L."/>
            <person name="Bugalter B.E."/>
            <person name="Butler J."/>
            <person name="Chang J.L."/>
            <person name="Chen C.-K."/>
            <person name="Cook A."/>
            <person name="Corum B."/>
            <person name="Cuomo C.A."/>
            <person name="de Jong P.J."/>
            <person name="DeCaprio D."/>
            <person name="Dewar K."/>
            <person name="FitzGerald M."/>
            <person name="Gilbert J."/>
            <person name="Gibson R."/>
            <person name="Gnerre S."/>
            <person name="Goldstein S."/>
            <person name="Grafham D.V."/>
            <person name="Grocock R."/>
            <person name="Hafez N."/>
            <person name="Hagopian D.S."/>
            <person name="Hart E."/>
            <person name="Norman C.H."/>
            <person name="Humphray S."/>
            <person name="Jaffe D.B."/>
            <person name="Jones M."/>
            <person name="Kamal M."/>
            <person name="Khodiyar V.K."/>
            <person name="LaButti K."/>
            <person name="Laird G."/>
            <person name="Lehoczky J."/>
            <person name="Liu X."/>
            <person name="Lokyitsang T."/>
            <person name="Loveland J."/>
            <person name="Lui A."/>
            <person name="Macdonald P."/>
            <person name="Major J.E."/>
            <person name="Matthews L."/>
            <person name="Mauceli E."/>
            <person name="McCarroll S.A."/>
            <person name="Mihalev A.H."/>
            <person name="Mudge J."/>
            <person name="Nguyen C."/>
            <person name="Nicol R."/>
            <person name="O'Leary S.B."/>
            <person name="Osoegawa K."/>
            <person name="Schwartz D.C."/>
            <person name="Shaw-Smith C."/>
            <person name="Stankiewicz P."/>
            <person name="Steward C."/>
            <person name="Swarbreck D."/>
            <person name="Venkataraman V."/>
            <person name="Whittaker C.A."/>
            <person name="Yang X."/>
            <person name="Zimmer A.R."/>
            <person name="Bradley A."/>
            <person name="Hubbard T."/>
            <person name="Birren B.W."/>
            <person name="Rogers J."/>
            <person name="Lander E.S."/>
            <person name="Nusbaum C."/>
        </authorList>
    </citation>
    <scope>NUCLEOTIDE SEQUENCE [LARGE SCALE GENOMIC DNA]</scope>
</reference>
<reference key="4">
    <citation type="submission" date="2005-09" db="EMBL/GenBank/DDBJ databases">
        <authorList>
            <person name="Mural R.J."/>
            <person name="Istrail S."/>
            <person name="Sutton G.G."/>
            <person name="Florea L."/>
            <person name="Halpern A.L."/>
            <person name="Mobarry C.M."/>
            <person name="Lippert R."/>
            <person name="Walenz B."/>
            <person name="Shatkay H."/>
            <person name="Dew I."/>
            <person name="Miller J.R."/>
            <person name="Flanigan M.J."/>
            <person name="Edwards N.J."/>
            <person name="Bolanos R."/>
            <person name="Fasulo D."/>
            <person name="Halldorsson B.V."/>
            <person name="Hannenhalli S."/>
            <person name="Turner R."/>
            <person name="Yooseph S."/>
            <person name="Lu F."/>
            <person name="Nusskern D.R."/>
            <person name="Shue B.C."/>
            <person name="Zheng X.H."/>
            <person name="Zhong F."/>
            <person name="Delcher A.L."/>
            <person name="Huson D.H."/>
            <person name="Kravitz S.A."/>
            <person name="Mouchard L."/>
            <person name="Reinert K."/>
            <person name="Remington K.A."/>
            <person name="Clark A.G."/>
            <person name="Waterman M.S."/>
            <person name="Eichler E.E."/>
            <person name="Adams M.D."/>
            <person name="Hunkapiller M.W."/>
            <person name="Myers E.W."/>
            <person name="Venter J.C."/>
        </authorList>
    </citation>
    <scope>NUCLEOTIDE SEQUENCE [LARGE SCALE GENOMIC DNA]</scope>
</reference>
<reference key="5">
    <citation type="journal article" date="2004" name="Genome Res.">
        <title>The status, quality, and expansion of the NIH full-length cDNA project: the Mammalian Gene Collection (MGC).</title>
        <authorList>
            <consortium name="The MGC Project Team"/>
        </authorList>
    </citation>
    <scope>NUCLEOTIDE SEQUENCE [LARGE SCALE MRNA] (ISOFORM 1)</scope>
    <source>
        <tissue>Skin</tissue>
    </source>
</reference>
<reference key="6">
    <citation type="journal article" date="2008" name="Proc. Natl. Acad. Sci. U.S.A.">
        <title>A quantitative atlas of mitotic phosphorylation.</title>
        <authorList>
            <person name="Dephoure N."/>
            <person name="Zhou C."/>
            <person name="Villen J."/>
            <person name="Beausoleil S.A."/>
            <person name="Bakalarski C.E."/>
            <person name="Elledge S.J."/>
            <person name="Gygi S.P."/>
        </authorList>
    </citation>
    <scope>PHOSPHORYLATION [LARGE SCALE ANALYSIS] AT SER-13</scope>
    <scope>IDENTIFICATION BY MASS SPECTROMETRY [LARGE SCALE ANALYSIS]</scope>
    <source>
        <tissue>Cervix carcinoma</tissue>
    </source>
</reference>
<reference key="7">
    <citation type="journal article" date="2011" name="EMBO Rep.">
        <title>MiD49 and MiD51, new components of the mitochondrial fission machinery.</title>
        <authorList>
            <person name="Palmer C.S."/>
            <person name="Osellame L.D."/>
            <person name="Laine D."/>
            <person name="Koutsopoulos O.S."/>
            <person name="Frazier A.E."/>
            <person name="Ryan M.T."/>
        </authorList>
    </citation>
    <scope>SUBCELLULAR LOCATION</scope>
    <scope>FUNCTION</scope>
    <scope>INTERACTION WITH DNM1L</scope>
</reference>
<reference key="8">
    <citation type="journal article" date="2013" name="J. Biol. Chem.">
        <title>MiD49 and MiD51 can act independently of Mff and Fis1 in Drp1 recruitment and are specific for mitochondrial fission.</title>
        <authorList>
            <person name="Palmer C.S."/>
            <person name="Elgass K.D."/>
            <person name="Parton R.G."/>
            <person name="Osellame L.D."/>
            <person name="Stojanovski D."/>
            <person name="Ryan M.T."/>
        </authorList>
    </citation>
    <scope>FUNCTION</scope>
</reference>
<reference key="9">
    <citation type="journal article" date="2013" name="Mol. Biol. Cell">
        <title>Fis1, Mff, MiD49, and MiD51 mediate Drp1 recruitment in mitochondrial fission.</title>
        <authorList>
            <person name="Loson O.C."/>
            <person name="Song Z."/>
            <person name="Chen H."/>
            <person name="Chan D.C."/>
        </authorList>
    </citation>
    <scope>FUNCTION</scope>
    <scope>INTERACTION WITH DNM1L</scope>
</reference>
<reference key="10">
    <citation type="journal article" date="2013" name="Proc. Natl. Acad. Sci. U.S.A.">
        <title>Interchangeable adaptors regulate mitochondrial dynamin assembly for membrane scission.</title>
        <authorList>
            <person name="Koirala S."/>
            <person name="Guo Q."/>
            <person name="Kalia R."/>
            <person name="Bui H.T."/>
            <person name="Eckert D.M."/>
            <person name="Frost A."/>
            <person name="Shaw J.M."/>
        </authorList>
    </citation>
    <scope>FUNCTION</scope>
    <scope>INTERACTION WITH DNM1L</scope>
    <scope>SUBUNIT</scope>
</reference>
<reference key="11">
    <citation type="journal article" date="2018" name="Hum. Mol. Genet.">
        <title>A novel mechanism causing imbalance of mitochondrial fusion and fission in human myopathies.</title>
        <authorList>
            <person name="Bartsakoulia M."/>
            <person name="Pyle A."/>
            <person name="Troncoso-Chandia D."/>
            <person name="Vial-Brizzi J."/>
            <person name="Paz-Fiblas M.V."/>
            <person name="Duff J."/>
            <person name="Griffin H."/>
            <person name="Boczonadi V."/>
            <person name="Lochmueller H."/>
            <person name="Kleinle S."/>
            <person name="Chinnery P.F."/>
            <person name="Gruenert S."/>
            <person name="Kirschner J."/>
            <person name="Eisner V."/>
            <person name="Horvath R."/>
        </authorList>
    </citation>
    <scope>FUNCTION</scope>
    <scope>VARIANT COXPD49 81-GLN--LEU-454 DEL</scope>
    <scope>INVOLVEMENT IN COXPD49</scope>
</reference>
<reference evidence="13" key="12">
    <citation type="journal article" date="2018" name="Nature">
        <title>Structural basis of mitochondrial receptor binding and constriction by DRP1.</title>
        <authorList>
            <person name="Kalia R."/>
            <person name="Wang R.Y."/>
            <person name="Yusuf A."/>
            <person name="Thomas P.V."/>
            <person name="Agard D.A."/>
            <person name="Shaw J.M."/>
            <person name="Frost A."/>
        </authorList>
    </citation>
    <scope>STRUCTURE BY ELECTRON MICROSCOPY (4.22 ANGSTROMS) OF 126-454 IN COMPLEX WITH DNM1L</scope>
    <scope>FUNCTION</scope>
    <scope>MUTAGENESIS OF ARG-235</scope>
</reference>
<evidence type="ECO:0000250" key="1"/>
<evidence type="ECO:0000255" key="2"/>
<evidence type="ECO:0000256" key="3">
    <source>
        <dbReference type="SAM" id="MobiDB-lite"/>
    </source>
</evidence>
<evidence type="ECO:0000269" key="4">
    <source>
    </source>
</evidence>
<evidence type="ECO:0000269" key="5">
    <source>
    </source>
</evidence>
<evidence type="ECO:0000269" key="6">
    <source>
    </source>
</evidence>
<evidence type="ECO:0000269" key="7">
    <source>
    </source>
</evidence>
<evidence type="ECO:0000269" key="8">
    <source>
    </source>
</evidence>
<evidence type="ECO:0000269" key="9">
    <source>
    </source>
</evidence>
<evidence type="ECO:0000269" key="10">
    <source>
    </source>
</evidence>
<evidence type="ECO:0000303" key="11">
    <source>
    </source>
</evidence>
<evidence type="ECO:0000305" key="12"/>
<evidence type="ECO:0007744" key="13">
    <source>
        <dbReference type="PDB" id="5WP9"/>
    </source>
</evidence>
<evidence type="ECO:0007744" key="14">
    <source>
    </source>
</evidence>
<keyword id="KW-0002">3D-structure</keyword>
<keyword id="KW-0025">Alternative splicing</keyword>
<keyword id="KW-0225">Disease variant</keyword>
<keyword id="KW-0472">Membrane</keyword>
<keyword id="KW-0496">Mitochondrion</keyword>
<keyword id="KW-1000">Mitochondrion outer membrane</keyword>
<keyword id="KW-0597">Phosphoprotein</keyword>
<keyword id="KW-1274">Primary mitochondrial disease</keyword>
<keyword id="KW-1267">Proteomics identification</keyword>
<keyword id="KW-1185">Reference proteome</keyword>
<keyword id="KW-0812">Transmembrane</keyword>
<keyword id="KW-1133">Transmembrane helix</keyword>
<protein>
    <recommendedName>
        <fullName>Mitochondrial dynamics protein MID49</fullName>
    </recommendedName>
    <alternativeName>
        <fullName>Mitochondrial dynamics protein of 49 kDa</fullName>
    </alternativeName>
    <alternativeName>
        <fullName>Mitochondrial elongation factor 2</fullName>
    </alternativeName>
    <alternativeName>
        <fullName>Smith-Magenis syndrome chromosomal region candidate gene 7 protein</fullName>
    </alternativeName>
</protein>